<evidence type="ECO:0000255" key="1">
    <source>
        <dbReference type="HAMAP-Rule" id="MF_01306"/>
    </source>
</evidence>
<evidence type="ECO:0000305" key="2"/>
<keyword id="KW-1185">Reference proteome</keyword>
<keyword id="KW-0687">Ribonucleoprotein</keyword>
<keyword id="KW-0689">Ribosomal protein</keyword>
<keyword id="KW-0694">RNA-binding</keyword>
<keyword id="KW-0699">rRNA-binding</keyword>
<gene>
    <name evidence="1" type="primary">rpsD</name>
    <name type="ordered locus">SP_0085</name>
</gene>
<accession>P66565</accession>
<accession>Q97T69</accession>
<proteinExistence type="inferred from homology"/>
<feature type="chain" id="PRO_0000132471" description="Small ribosomal subunit protein uS4">
    <location>
        <begin position="1"/>
        <end position="203"/>
    </location>
</feature>
<feature type="domain" description="S4 RNA-binding" evidence="1">
    <location>
        <begin position="93"/>
        <end position="156"/>
    </location>
</feature>
<name>RS4_STRPN</name>
<dbReference type="EMBL" id="AE005672">
    <property type="protein sequence ID" value="AAK74273.1"/>
    <property type="molecule type" value="Genomic_DNA"/>
</dbReference>
<dbReference type="PIR" id="H95009">
    <property type="entry name" value="H95009"/>
</dbReference>
<dbReference type="RefSeq" id="WP_000092756.1">
    <property type="nucleotide sequence ID" value="NZ_CP155539.1"/>
</dbReference>
<dbReference type="SMR" id="P66565"/>
<dbReference type="PaxDb" id="170187-SP_0085"/>
<dbReference type="EnsemblBacteria" id="AAK74273">
    <property type="protein sequence ID" value="AAK74273"/>
    <property type="gene ID" value="SP_0085"/>
</dbReference>
<dbReference type="GeneID" id="93738707"/>
<dbReference type="KEGG" id="spn:SP_0085"/>
<dbReference type="eggNOG" id="COG0522">
    <property type="taxonomic scope" value="Bacteria"/>
</dbReference>
<dbReference type="PhylomeDB" id="P66565"/>
<dbReference type="BioCyc" id="SPNE170187:G1FZB-89-MONOMER"/>
<dbReference type="Proteomes" id="UP000000585">
    <property type="component" value="Chromosome"/>
</dbReference>
<dbReference type="GO" id="GO:0015935">
    <property type="term" value="C:small ribosomal subunit"/>
    <property type="evidence" value="ECO:0007669"/>
    <property type="project" value="InterPro"/>
</dbReference>
<dbReference type="GO" id="GO:0019843">
    <property type="term" value="F:rRNA binding"/>
    <property type="evidence" value="ECO:0007669"/>
    <property type="project" value="UniProtKB-UniRule"/>
</dbReference>
<dbReference type="GO" id="GO:0003735">
    <property type="term" value="F:structural constituent of ribosome"/>
    <property type="evidence" value="ECO:0007669"/>
    <property type="project" value="InterPro"/>
</dbReference>
<dbReference type="GO" id="GO:0042274">
    <property type="term" value="P:ribosomal small subunit biogenesis"/>
    <property type="evidence" value="ECO:0007669"/>
    <property type="project" value="TreeGrafter"/>
</dbReference>
<dbReference type="GO" id="GO:0006412">
    <property type="term" value="P:translation"/>
    <property type="evidence" value="ECO:0007669"/>
    <property type="project" value="UniProtKB-UniRule"/>
</dbReference>
<dbReference type="CDD" id="cd00165">
    <property type="entry name" value="S4"/>
    <property type="match status" value="1"/>
</dbReference>
<dbReference type="FunFam" id="1.10.1050.10:FF:000001">
    <property type="entry name" value="30S ribosomal protein S4"/>
    <property type="match status" value="1"/>
</dbReference>
<dbReference type="FunFam" id="3.10.290.10:FF:000001">
    <property type="entry name" value="30S ribosomal protein S4"/>
    <property type="match status" value="1"/>
</dbReference>
<dbReference type="Gene3D" id="1.10.1050.10">
    <property type="entry name" value="Ribosomal Protein S4 Delta 41, Chain A, domain 1"/>
    <property type="match status" value="1"/>
</dbReference>
<dbReference type="Gene3D" id="3.10.290.10">
    <property type="entry name" value="RNA-binding S4 domain"/>
    <property type="match status" value="1"/>
</dbReference>
<dbReference type="HAMAP" id="MF_01306_B">
    <property type="entry name" value="Ribosomal_uS4_B"/>
    <property type="match status" value="1"/>
</dbReference>
<dbReference type="InterPro" id="IPR022801">
    <property type="entry name" value="Ribosomal_uS4"/>
</dbReference>
<dbReference type="InterPro" id="IPR005709">
    <property type="entry name" value="Ribosomal_uS4_bac-type"/>
</dbReference>
<dbReference type="InterPro" id="IPR018079">
    <property type="entry name" value="Ribosomal_uS4_CS"/>
</dbReference>
<dbReference type="InterPro" id="IPR001912">
    <property type="entry name" value="Ribosomal_uS4_N"/>
</dbReference>
<dbReference type="InterPro" id="IPR002942">
    <property type="entry name" value="S4_RNA-bd"/>
</dbReference>
<dbReference type="InterPro" id="IPR036986">
    <property type="entry name" value="S4_RNA-bd_sf"/>
</dbReference>
<dbReference type="NCBIfam" id="NF003717">
    <property type="entry name" value="PRK05327.1"/>
    <property type="match status" value="1"/>
</dbReference>
<dbReference type="NCBIfam" id="TIGR01017">
    <property type="entry name" value="rpsD_bact"/>
    <property type="match status" value="1"/>
</dbReference>
<dbReference type="PANTHER" id="PTHR11831">
    <property type="entry name" value="30S 40S RIBOSOMAL PROTEIN"/>
    <property type="match status" value="1"/>
</dbReference>
<dbReference type="PANTHER" id="PTHR11831:SF4">
    <property type="entry name" value="SMALL RIBOSOMAL SUBUNIT PROTEIN US4M"/>
    <property type="match status" value="1"/>
</dbReference>
<dbReference type="Pfam" id="PF00163">
    <property type="entry name" value="Ribosomal_S4"/>
    <property type="match status" value="1"/>
</dbReference>
<dbReference type="Pfam" id="PF01479">
    <property type="entry name" value="S4"/>
    <property type="match status" value="1"/>
</dbReference>
<dbReference type="SMART" id="SM01390">
    <property type="entry name" value="Ribosomal_S4"/>
    <property type="match status" value="1"/>
</dbReference>
<dbReference type="SMART" id="SM00363">
    <property type="entry name" value="S4"/>
    <property type="match status" value="1"/>
</dbReference>
<dbReference type="SUPFAM" id="SSF55174">
    <property type="entry name" value="Alpha-L RNA-binding motif"/>
    <property type="match status" value="1"/>
</dbReference>
<dbReference type="PROSITE" id="PS00632">
    <property type="entry name" value="RIBOSOMAL_S4"/>
    <property type="match status" value="1"/>
</dbReference>
<dbReference type="PROSITE" id="PS50889">
    <property type="entry name" value="S4"/>
    <property type="match status" value="1"/>
</dbReference>
<comment type="function">
    <text evidence="1">One of the primary rRNA binding proteins, it binds directly to 16S rRNA where it nucleates assembly of the body of the 30S subunit.</text>
</comment>
<comment type="function">
    <text evidence="1">With S5 and S12 plays an important role in translational accuracy.</text>
</comment>
<comment type="subunit">
    <text evidence="1">Part of the 30S ribosomal subunit. Contacts protein S5. The interaction surface between S4 and S5 is involved in control of translational fidelity.</text>
</comment>
<comment type="similarity">
    <text evidence="1">Belongs to the universal ribosomal protein uS4 family.</text>
</comment>
<sequence length="203" mass="23029">MSRYTGPSWKQARRLGLSLTGTGKELARRNYVPGQHGPNNRSKLSEYGLQLAEKQKLRFTYGVGEKQFRNLFVQATKIKGGILGFNFMLLLERRLDNVVYRLGLATTRRQARQFVNHGHILVDGKRVDIPSYRVTPGQVISVREKSLKVPAILEAVEATLGRPAFVSFDAEKLEGSLTRLPERDEINPEINEALVVEFYNKML</sequence>
<protein>
    <recommendedName>
        <fullName evidence="1">Small ribosomal subunit protein uS4</fullName>
    </recommendedName>
    <alternativeName>
        <fullName evidence="2">30S ribosomal protein S4</fullName>
    </alternativeName>
</protein>
<reference key="1">
    <citation type="journal article" date="2001" name="Science">
        <title>Complete genome sequence of a virulent isolate of Streptococcus pneumoniae.</title>
        <authorList>
            <person name="Tettelin H."/>
            <person name="Nelson K.E."/>
            <person name="Paulsen I.T."/>
            <person name="Eisen J.A."/>
            <person name="Read T.D."/>
            <person name="Peterson S.N."/>
            <person name="Heidelberg J.F."/>
            <person name="DeBoy R.T."/>
            <person name="Haft D.H."/>
            <person name="Dodson R.J."/>
            <person name="Durkin A.S."/>
            <person name="Gwinn M.L."/>
            <person name="Kolonay J.F."/>
            <person name="Nelson W.C."/>
            <person name="Peterson J.D."/>
            <person name="Umayam L.A."/>
            <person name="White O."/>
            <person name="Salzberg S.L."/>
            <person name="Lewis M.R."/>
            <person name="Radune D."/>
            <person name="Holtzapple E.K."/>
            <person name="Khouri H.M."/>
            <person name="Wolf A.M."/>
            <person name="Utterback T.R."/>
            <person name="Hansen C.L."/>
            <person name="McDonald L.A."/>
            <person name="Feldblyum T.V."/>
            <person name="Angiuoli S.V."/>
            <person name="Dickinson T."/>
            <person name="Hickey E.K."/>
            <person name="Holt I.E."/>
            <person name="Loftus B.J."/>
            <person name="Yang F."/>
            <person name="Smith H.O."/>
            <person name="Venter J.C."/>
            <person name="Dougherty B.A."/>
            <person name="Morrison D.A."/>
            <person name="Hollingshead S.K."/>
            <person name="Fraser C.M."/>
        </authorList>
    </citation>
    <scope>NUCLEOTIDE SEQUENCE [LARGE SCALE GENOMIC DNA]</scope>
    <source>
        <strain>ATCC BAA-334 / TIGR4</strain>
    </source>
</reference>
<organism>
    <name type="scientific">Streptococcus pneumoniae serotype 4 (strain ATCC BAA-334 / TIGR4)</name>
    <dbReference type="NCBI Taxonomy" id="170187"/>
    <lineage>
        <taxon>Bacteria</taxon>
        <taxon>Bacillati</taxon>
        <taxon>Bacillota</taxon>
        <taxon>Bacilli</taxon>
        <taxon>Lactobacillales</taxon>
        <taxon>Streptococcaceae</taxon>
        <taxon>Streptococcus</taxon>
    </lineage>
</organism>